<feature type="signal peptide" evidence="7">
    <location>
        <begin position="1"/>
        <end position="20"/>
    </location>
</feature>
<feature type="chain" id="PRO_0000034729" description="Toll-like receptor 5">
    <location>
        <begin position="21"/>
        <end position="858"/>
    </location>
</feature>
<feature type="topological domain" description="Extracellular" evidence="2">
    <location>
        <begin position="21"/>
        <end position="639"/>
    </location>
</feature>
<feature type="transmembrane region" description="Helical" evidence="2">
    <location>
        <begin position="640"/>
        <end position="660"/>
    </location>
</feature>
<feature type="topological domain" description="Cytoplasmic" evidence="2">
    <location>
        <begin position="661"/>
        <end position="858"/>
    </location>
</feature>
<feature type="repeat" description="LRR 1" evidence="14">
    <location>
        <begin position="45"/>
        <end position="68"/>
    </location>
</feature>
<feature type="repeat" description="LRR 2" evidence="14">
    <location>
        <begin position="71"/>
        <end position="93"/>
    </location>
</feature>
<feature type="repeat" description="LRR 3" evidence="14">
    <location>
        <begin position="95"/>
        <end position="117"/>
    </location>
</feature>
<feature type="repeat" description="LRR 4" evidence="14">
    <location>
        <begin position="120"/>
        <end position="143"/>
    </location>
</feature>
<feature type="repeat" description="LRR 5" evidence="14">
    <location>
        <begin position="146"/>
        <end position="166"/>
    </location>
</feature>
<feature type="repeat" description="LRR 6" evidence="14">
    <location>
        <begin position="171"/>
        <end position="192"/>
    </location>
</feature>
<feature type="repeat" description="LRR 7" evidence="14">
    <location>
        <begin position="197"/>
        <end position="211"/>
    </location>
</feature>
<feature type="repeat" description="LRR 8" evidence="14">
    <location>
        <begin position="214"/>
        <end position="229"/>
    </location>
</feature>
<feature type="repeat" description="LRR 9" evidence="14">
    <location>
        <begin position="234"/>
        <end position="235"/>
    </location>
</feature>
<feature type="repeat" description="LRR 11" evidence="14">
    <location>
        <begin position="260"/>
        <end position="284"/>
    </location>
</feature>
<feature type="repeat" description="LRR 12" evidence="14">
    <location>
        <begin position="289"/>
        <end position="301"/>
    </location>
</feature>
<feature type="repeat" description="LRR 13" evidence="14">
    <location>
        <begin position="313"/>
        <end position="334"/>
    </location>
</feature>
<feature type="repeat" description="LRR 14" evidence="14">
    <location>
        <begin position="337"/>
        <end position="355"/>
    </location>
</feature>
<feature type="repeat" description="LRR 16" evidence="14">
    <location>
        <begin position="385"/>
        <end position="401"/>
    </location>
</feature>
<feature type="repeat" description="LRR 17" evidence="14">
    <location>
        <begin position="412"/>
        <end position="431"/>
    </location>
</feature>
<feature type="repeat" description="LRR 18" evidence="14">
    <location>
        <begin position="449"/>
        <end position="470"/>
    </location>
</feature>
<feature type="repeat" description="LRR 19" evidence="14">
    <location>
        <begin position="474"/>
        <end position="495"/>
    </location>
</feature>
<feature type="repeat" description="LRR 20" evidence="14">
    <location>
        <begin position="503"/>
        <end position="524"/>
    </location>
</feature>
<feature type="repeat" description="LRR 21" evidence="14">
    <location>
        <begin position="527"/>
        <end position="546"/>
    </location>
</feature>
<feature type="repeat" description="LRR 22" evidence="14">
    <location>
        <begin position="549"/>
        <end position="567"/>
    </location>
</feature>
<feature type="domain" description="LRRCT">
    <location>
        <begin position="579"/>
        <end position="631"/>
    </location>
</feature>
<feature type="domain" description="TIR" evidence="3">
    <location>
        <begin position="691"/>
        <end position="836"/>
    </location>
</feature>
<feature type="modified residue" description="Phosphotyrosine" evidence="9">
    <location>
        <position position="798"/>
    </location>
</feature>
<feature type="modified residue" description="Phosphoserine; by PKD/PRKD1" evidence="10">
    <location>
        <position position="805"/>
    </location>
</feature>
<feature type="glycosylation site" description="N-linked (GlcNAc...) asparagine" evidence="14">
    <location>
        <position position="37"/>
    </location>
</feature>
<feature type="glycosylation site" description="N-linked (GlcNAc...) asparagine" evidence="14">
    <location>
        <position position="46"/>
    </location>
</feature>
<feature type="glycosylation site" description="N-linked (GlcNAc...) asparagine" evidence="14">
    <location>
        <position position="245"/>
    </location>
</feature>
<feature type="glycosylation site" description="N-linked (GlcNAc...) asparagine" evidence="14">
    <location>
        <position position="342"/>
    </location>
</feature>
<feature type="glycosylation site" description="N-linked (GlcNAc...) asparagine" evidence="14">
    <location>
        <position position="422"/>
    </location>
</feature>
<feature type="glycosylation site" description="N-linked (GlcNAc...) asparagine" evidence="14">
    <location>
        <position position="595"/>
    </location>
</feature>
<feature type="glycosylation site" description="N-linked (GlcNAc...) asparagine" evidence="14">
    <location>
        <position position="598"/>
    </location>
</feature>
<feature type="disulfide bond" evidence="14">
    <location>
        <begin position="583"/>
        <end position="610"/>
    </location>
</feature>
<feature type="disulfide bond" evidence="14">
    <location>
        <begin position="585"/>
        <end position="629"/>
    </location>
</feature>
<feature type="sequence variant" id="VAR_032455" description="In dbSNP:rs764535.">
    <original>T</original>
    <variation>I</variation>
    <location>
        <position position="82"/>
    </location>
</feature>
<feature type="sequence variant" id="VAR_032456" description="In dbSNP:rs5744166.">
    <original>P</original>
    <variation>A</variation>
    <location>
        <position position="112"/>
    </location>
</feature>
<feature type="sequence variant" id="VAR_061856" description="In dbSNP:rs5744167.">
    <original>N</original>
    <variation>T</variation>
    <location>
        <position position="143"/>
    </location>
</feature>
<feature type="sequence variant" id="VAR_061857" description="In dbSNP:rs45528236.">
    <original>Q</original>
    <variation>K</variation>
    <location>
        <position position="181"/>
    </location>
</feature>
<feature type="sequence variant" id="VAR_018398" description="In 10% of the population; abolishes flagellin signaling; associated with resistance to SLEB1." evidence="6">
    <location>
        <begin position="392"/>
        <end position="858"/>
    </location>
</feature>
<feature type="sequence variant" id="VAR_018399" description="In dbSNP:rs2072493." evidence="6 8">
    <original>N</original>
    <variation>S</variation>
    <location>
        <position position="592"/>
    </location>
</feature>
<feature type="sequence variant" id="VAR_018400" description="In dbSNP:rs5744174." evidence="6 8 17">
    <original>F</original>
    <variation>L</variation>
    <location>
        <position position="616"/>
    </location>
</feature>
<feature type="sequence variant" id="VAR_070457" description="In dbSNP:rs5744175." evidence="12">
    <original>I</original>
    <variation>F</variation>
    <location>
        <position position="644"/>
    </location>
</feature>
<feature type="sequence variant" id="VAR_061858" description="In dbSNP:rs56243703.">
    <original>L</original>
    <variation>F</variation>
    <location>
        <position position="769"/>
    </location>
</feature>
<feature type="sequence conflict" description="In Ref. 1; AAC34376." evidence="18" ref="1">
    <original>L</original>
    <variation>V</variation>
    <location>
        <position position="231"/>
    </location>
</feature>
<feature type="sequence conflict" description="In Ref. 1; AAC34376." evidence="18" ref="1">
    <original>Y</original>
    <variation>C</variation>
    <location>
        <position position="352"/>
    </location>
</feature>
<feature type="sequence conflict" description="In Ref. 8; AAI09120." evidence="18" ref="8">
    <original>Q</original>
    <variation>R</variation>
    <location>
        <position position="387"/>
    </location>
</feature>
<feature type="helix" evidence="19">
    <location>
        <begin position="632"/>
        <end position="678"/>
    </location>
</feature>
<gene>
    <name type="primary">TLR5</name>
    <name type="synonym">TIL3</name>
</gene>
<comment type="function">
    <text evidence="1 4 5 11 13 16">Pattern recognition receptor (PRR) located on the cell surface that participates in the activation of innate immunity and inflammatory response (PubMed:11323673, PubMed:18490781). Recognizes small molecular motifs named pathogen-associated molecular pattern (PAMPs) expressed by pathogens and microbe-associated molecular patterns (MAMPs) usually expressed by resident microbiota (PubMed:29934223). Upon ligand binding such as bacterial flagellins, recruits intracellular adapter proteins MYD88 and TRIF leading to NF-kappa-B activation, cytokine secretion and induction of the inflammatory response (PubMed:11489966, PubMed:20855887). Plays thereby an important role in the relationship between the intestinal epithelium and enteric microbes and contributes to the gut microbiota composition throughout life (By similarity).</text>
</comment>
<comment type="subunit">
    <text evidence="13 14 15">Homodimer (PubMed:22173220). Interacts with MYD88 (via TIR domain) (PubMed:20855887). Interacts with TICAM1 (via TIR domain) (PubMed:20855887). Interacts with UNC93B1; this interaction is essential for proper TLR5 localization to the plasma membrane (PubMed:24778236).</text>
</comment>
<comment type="interaction">
    <interactant intactId="EBI-3505951">
        <id>O60602</id>
    </interactant>
    <interactant intactId="EBI-821758">
        <id>PRO_0000000092</id>
        <label>APP</label>
        <dbReference type="UniProtKB" id="P05067"/>
    </interactant>
    <organismsDiffer>false</organismsDiffer>
    <experiments>3</experiments>
</comment>
<comment type="interaction">
    <interactant intactId="EBI-3505951">
        <id>O60602</id>
    </interactant>
    <interactant intactId="EBI-2431589">
        <id>PRO_0000000093</id>
        <label>APP</label>
        <dbReference type="UniProtKB" id="P05067"/>
    </interactant>
    <organismsDiffer>false</organismsDiffer>
    <experiments>3</experiments>
</comment>
<comment type="subcellular location">
    <subcellularLocation>
        <location evidence="15">Cell membrane</location>
        <topology evidence="2">Single-pass type I membrane protein</topology>
    </subcellularLocation>
</comment>
<comment type="tissue specificity">
    <text evidence="5 11">Highly expressed on the basolateral surface of intestinal epithelia (PubMed:11489966). Expressed also in other cells such as lung epithelial cells (PubMed:11489966, PubMed:18490781).</text>
</comment>
<comment type="PTM">
    <text evidence="9 10">Phosphorylated at Ser-805 by PKD/PRKD1; phosphorylation induces the production of inflammatory cytokines.</text>
</comment>
<comment type="PTM">
    <text evidence="9 10">Phosphorylated at Tyr-798 upon flagellin binding; required for signaling.</text>
</comment>
<comment type="polymorphism">
    <text>Individuals with a common stop codon polymorphism in position 392 are unable to mediate flagellin signaling. This polymorphism acts in a dominant fashion and is associated with susceptibility to pneumonia caused by Legionella pneumophila [MIM:608556]. It also provides protection against systemic lupus erythematosus.</text>
</comment>
<comment type="polymorphism">
    <text>A nonsense TLR5 polymorphism, resulting in p.Arg392Ter, confers resistance to melioidosis [MIM:615557], an infection caused by the Gram-negative, flagellated soil saprophyte Burkholderia pseudomallei. Carriers of this hypofunctional TLR5 variant may generate impaired inflammatory responses during melioidosis infection that result in reduced organ failure and lower mortality.</text>
</comment>
<comment type="disease">
    <disease id="DI-02649">
        <name>Systemic lupus erythematosus 1</name>
        <acronym>SLEB1</acronym>
        <description>A chronic, relapsing, inflammatory, and often febrile multisystemic disorder of connective tissue, characterized principally by involvement of the skin, joints, kidneys and serosal membranes. It is of unknown etiology, but is thought to represent a failure of the regulatory mechanisms of the autoimmune system. The disease is marked by a wide range of system dysfunctions, an elevated erythrocyte sedimentation rate, and the formation of LE cells in the blood or bone marrow.</description>
        <dbReference type="MIM" id="601744"/>
    </disease>
    <text>Disease susceptibility is associated with variants affecting the gene represented in this entry.</text>
</comment>
<comment type="similarity">
    <text evidence="18">Belongs to the Toll-like receptor family.</text>
</comment>
<proteinExistence type="evidence at protein level"/>
<keyword id="KW-0002">3D-structure</keyword>
<keyword id="KW-1003">Cell membrane</keyword>
<keyword id="KW-0903">Direct protein sequencing</keyword>
<keyword id="KW-1015">Disulfide bond</keyword>
<keyword id="KW-0325">Glycoprotein</keyword>
<keyword id="KW-0391">Immunity</keyword>
<keyword id="KW-0395">Inflammatory response</keyword>
<keyword id="KW-0399">Innate immunity</keyword>
<keyword id="KW-0433">Leucine-rich repeat</keyword>
<keyword id="KW-0472">Membrane</keyword>
<keyword id="KW-0597">Phosphoprotein</keyword>
<keyword id="KW-1267">Proteomics identification</keyword>
<keyword id="KW-0675">Receptor</keyword>
<keyword id="KW-1185">Reference proteome</keyword>
<keyword id="KW-0677">Repeat</keyword>
<keyword id="KW-0732">Signal</keyword>
<keyword id="KW-0772">Systemic lupus erythematosus</keyword>
<keyword id="KW-0812">Transmembrane</keyword>
<keyword id="KW-1133">Transmembrane helix</keyword>
<accession>O60602</accession>
<accession>B1AZ05</accession>
<accession>B3Y633</accession>
<accession>B9VJ63</accession>
<accession>D1CS80</accession>
<accession>D3DTB8</accession>
<accession>O15456</accession>
<accession>Q32MI2</accession>
<accession>Q32MI3</accession>
<reference key="1">
    <citation type="journal article" date="1998" name="Blood">
        <title>Cloning and characterization of two Toll/Interleukin-1 receptor-like genes TIL3 and TIL4: evidence for a multi-gene receptor family in humans.</title>
        <authorList>
            <person name="Chaudhary P.M."/>
            <person name="Ferguson C."/>
            <person name="Nguyen V."/>
            <person name="Nguyen O."/>
            <person name="Massa H.F."/>
            <person name="Eby M."/>
            <person name="Jasmin A."/>
            <person name="Trask B.J."/>
            <person name="Hood L."/>
            <person name="Nelson P.S."/>
        </authorList>
    </citation>
    <scope>NUCLEOTIDE SEQUENCE [MRNA]</scope>
    <scope>VARIANT LEU-616</scope>
    <source>
        <tissue>Leukocyte</tissue>
        <tissue>Prostate</tissue>
    </source>
</reference>
<reference key="2">
    <citation type="submission" date="2001-04" db="EMBL/GenBank/DDBJ databases">
        <title>Homo sapiens TLR5.</title>
        <authorList>
            <person name="Seya T."/>
            <person name="Tsukada H."/>
        </authorList>
    </citation>
    <scope>NUCLEOTIDE SEQUENCE [MRNA]</scope>
    <source>
        <tissue>Macrophage</tissue>
    </source>
</reference>
<reference key="3">
    <citation type="journal article" date="2008" name="Immunogenetics">
        <title>Natural selection in the TLR-related genes in the course of primate evolution.</title>
        <authorList>
            <person name="Nakajima T."/>
            <person name="Ohtani H."/>
            <person name="Satta Y."/>
            <person name="Uno Y."/>
            <person name="Akari H."/>
            <person name="Ishida T."/>
            <person name="Kimura A."/>
        </authorList>
    </citation>
    <scope>NUCLEOTIDE SEQUENCE [MRNA]</scope>
</reference>
<reference key="4">
    <citation type="journal article" date="2009" name="Mol. Biol. Evol.">
        <title>A history of recurrent positive selection at the toll-like receptor 5 in primates.</title>
        <authorList>
            <person name="Wlasiuk G."/>
            <person name="Khan S."/>
            <person name="Switzer W.M."/>
            <person name="Nachman M.W."/>
        </authorList>
    </citation>
    <scope>NUCLEOTIDE SEQUENCE [GENOMIC DNA]</scope>
</reference>
<reference key="5">
    <citation type="journal article" date="2009" name="PLoS ONE">
        <title>The heterogeneous allelic repertoire of human Toll-Like receptor (TLR) genes.</title>
        <authorList>
            <person name="Georgel P."/>
            <person name="Macquin C."/>
            <person name="Bahram S."/>
        </authorList>
    </citation>
    <scope>NUCLEOTIDE SEQUENCE [GENOMIC DNA]</scope>
    <scope>VARIANT PHE-644</scope>
</reference>
<reference key="6">
    <citation type="journal article" date="2006" name="Nature">
        <title>The DNA sequence and biological annotation of human chromosome 1.</title>
        <authorList>
            <person name="Gregory S.G."/>
            <person name="Barlow K.F."/>
            <person name="McLay K.E."/>
            <person name="Kaul R."/>
            <person name="Swarbreck D."/>
            <person name="Dunham A."/>
            <person name="Scott C.E."/>
            <person name="Howe K.L."/>
            <person name="Woodfine K."/>
            <person name="Spencer C.C.A."/>
            <person name="Jones M.C."/>
            <person name="Gillson C."/>
            <person name="Searle S."/>
            <person name="Zhou Y."/>
            <person name="Kokocinski F."/>
            <person name="McDonald L."/>
            <person name="Evans R."/>
            <person name="Phillips K."/>
            <person name="Atkinson A."/>
            <person name="Cooper R."/>
            <person name="Jones C."/>
            <person name="Hall R.E."/>
            <person name="Andrews T.D."/>
            <person name="Lloyd C."/>
            <person name="Ainscough R."/>
            <person name="Almeida J.P."/>
            <person name="Ambrose K.D."/>
            <person name="Anderson F."/>
            <person name="Andrew R.W."/>
            <person name="Ashwell R.I.S."/>
            <person name="Aubin K."/>
            <person name="Babbage A.K."/>
            <person name="Bagguley C.L."/>
            <person name="Bailey J."/>
            <person name="Beasley H."/>
            <person name="Bethel G."/>
            <person name="Bird C.P."/>
            <person name="Bray-Allen S."/>
            <person name="Brown J.Y."/>
            <person name="Brown A.J."/>
            <person name="Buckley D."/>
            <person name="Burton J."/>
            <person name="Bye J."/>
            <person name="Carder C."/>
            <person name="Chapman J.C."/>
            <person name="Clark S.Y."/>
            <person name="Clarke G."/>
            <person name="Clee C."/>
            <person name="Cobley V."/>
            <person name="Collier R.E."/>
            <person name="Corby N."/>
            <person name="Coville G.J."/>
            <person name="Davies J."/>
            <person name="Deadman R."/>
            <person name="Dunn M."/>
            <person name="Earthrowl M."/>
            <person name="Ellington A.G."/>
            <person name="Errington H."/>
            <person name="Frankish A."/>
            <person name="Frankland J."/>
            <person name="French L."/>
            <person name="Garner P."/>
            <person name="Garnett J."/>
            <person name="Gay L."/>
            <person name="Ghori M.R.J."/>
            <person name="Gibson R."/>
            <person name="Gilby L.M."/>
            <person name="Gillett W."/>
            <person name="Glithero R.J."/>
            <person name="Grafham D.V."/>
            <person name="Griffiths C."/>
            <person name="Griffiths-Jones S."/>
            <person name="Grocock R."/>
            <person name="Hammond S."/>
            <person name="Harrison E.S.I."/>
            <person name="Hart E."/>
            <person name="Haugen E."/>
            <person name="Heath P.D."/>
            <person name="Holmes S."/>
            <person name="Holt K."/>
            <person name="Howden P.J."/>
            <person name="Hunt A.R."/>
            <person name="Hunt S.E."/>
            <person name="Hunter G."/>
            <person name="Isherwood J."/>
            <person name="James R."/>
            <person name="Johnson C."/>
            <person name="Johnson D."/>
            <person name="Joy A."/>
            <person name="Kay M."/>
            <person name="Kershaw J.K."/>
            <person name="Kibukawa M."/>
            <person name="Kimberley A.M."/>
            <person name="King A."/>
            <person name="Knights A.J."/>
            <person name="Lad H."/>
            <person name="Laird G."/>
            <person name="Lawlor S."/>
            <person name="Leongamornlert D.A."/>
            <person name="Lloyd D.M."/>
            <person name="Loveland J."/>
            <person name="Lovell J."/>
            <person name="Lush M.J."/>
            <person name="Lyne R."/>
            <person name="Martin S."/>
            <person name="Mashreghi-Mohammadi M."/>
            <person name="Matthews L."/>
            <person name="Matthews N.S.W."/>
            <person name="McLaren S."/>
            <person name="Milne S."/>
            <person name="Mistry S."/>
            <person name="Moore M.J.F."/>
            <person name="Nickerson T."/>
            <person name="O'Dell C.N."/>
            <person name="Oliver K."/>
            <person name="Palmeiri A."/>
            <person name="Palmer S.A."/>
            <person name="Parker A."/>
            <person name="Patel D."/>
            <person name="Pearce A.V."/>
            <person name="Peck A.I."/>
            <person name="Pelan S."/>
            <person name="Phelps K."/>
            <person name="Phillimore B.J."/>
            <person name="Plumb R."/>
            <person name="Rajan J."/>
            <person name="Raymond C."/>
            <person name="Rouse G."/>
            <person name="Saenphimmachak C."/>
            <person name="Sehra H.K."/>
            <person name="Sheridan E."/>
            <person name="Shownkeen R."/>
            <person name="Sims S."/>
            <person name="Skuce C.D."/>
            <person name="Smith M."/>
            <person name="Steward C."/>
            <person name="Subramanian S."/>
            <person name="Sycamore N."/>
            <person name="Tracey A."/>
            <person name="Tromans A."/>
            <person name="Van Helmond Z."/>
            <person name="Wall M."/>
            <person name="Wallis J.M."/>
            <person name="White S."/>
            <person name="Whitehead S.L."/>
            <person name="Wilkinson J.E."/>
            <person name="Willey D.L."/>
            <person name="Williams H."/>
            <person name="Wilming L."/>
            <person name="Wray P.W."/>
            <person name="Wu Z."/>
            <person name="Coulson A."/>
            <person name="Vaudin M."/>
            <person name="Sulston J.E."/>
            <person name="Durbin R.M."/>
            <person name="Hubbard T."/>
            <person name="Wooster R."/>
            <person name="Dunham I."/>
            <person name="Carter N.P."/>
            <person name="McVean G."/>
            <person name="Ross M.T."/>
            <person name="Harrow J."/>
            <person name="Olson M.V."/>
            <person name="Beck S."/>
            <person name="Rogers J."/>
            <person name="Bentley D.R."/>
        </authorList>
    </citation>
    <scope>NUCLEOTIDE SEQUENCE [LARGE SCALE GENOMIC DNA]</scope>
</reference>
<reference key="7">
    <citation type="submission" date="2005-09" db="EMBL/GenBank/DDBJ databases">
        <authorList>
            <person name="Mural R.J."/>
            <person name="Istrail S."/>
            <person name="Sutton G.G."/>
            <person name="Florea L."/>
            <person name="Halpern A.L."/>
            <person name="Mobarry C.M."/>
            <person name="Lippert R."/>
            <person name="Walenz B."/>
            <person name="Shatkay H."/>
            <person name="Dew I."/>
            <person name="Miller J.R."/>
            <person name="Flanigan M.J."/>
            <person name="Edwards N.J."/>
            <person name="Bolanos R."/>
            <person name="Fasulo D."/>
            <person name="Halldorsson B.V."/>
            <person name="Hannenhalli S."/>
            <person name="Turner R."/>
            <person name="Yooseph S."/>
            <person name="Lu F."/>
            <person name="Nusskern D.R."/>
            <person name="Shue B.C."/>
            <person name="Zheng X.H."/>
            <person name="Zhong F."/>
            <person name="Delcher A.L."/>
            <person name="Huson D.H."/>
            <person name="Kravitz S.A."/>
            <person name="Mouchard L."/>
            <person name="Reinert K."/>
            <person name="Remington K.A."/>
            <person name="Clark A.G."/>
            <person name="Waterman M.S."/>
            <person name="Eichler E.E."/>
            <person name="Adams M.D."/>
            <person name="Hunkapiller M.W."/>
            <person name="Myers E.W."/>
            <person name="Venter J.C."/>
        </authorList>
    </citation>
    <scope>NUCLEOTIDE SEQUENCE [LARGE SCALE GENOMIC DNA]</scope>
</reference>
<reference key="8">
    <citation type="journal article" date="2004" name="Genome Res.">
        <title>The status, quality, and expansion of the NIH full-length cDNA project: the Mammalian Gene Collection (MGC).</title>
        <authorList>
            <consortium name="The MGC Project Team"/>
        </authorList>
    </citation>
    <scope>NUCLEOTIDE SEQUENCE [LARGE SCALE MRNA]</scope>
</reference>
<reference key="9">
    <citation type="journal article" date="1998" name="Proc. Natl. Acad. Sci. U.S.A.">
        <title>A family of human receptors structurally related to Drosophila Toll.</title>
        <authorList>
            <person name="Rock F.L."/>
            <person name="Hardiman G."/>
            <person name="Timans J.C."/>
            <person name="Kastelein R.A."/>
            <person name="Bazan J.F."/>
        </authorList>
    </citation>
    <scope>NUCLEOTIDE SEQUENCE [MRNA] OF 494-858</scope>
    <source>
        <tissue>CNS</tissue>
    </source>
</reference>
<reference key="10">
    <citation type="journal article" date="2004" name="Protein Sci.">
        <title>Signal peptide prediction based on analysis of experimentally verified cleavage sites.</title>
        <authorList>
            <person name="Zhang Z."/>
            <person name="Henzel W.J."/>
        </authorList>
    </citation>
    <scope>PROTEIN SEQUENCE OF 21-35</scope>
</reference>
<reference key="11">
    <citation type="journal article" date="2001" name="J. Immunol.">
        <title>Cutting edge: bacterial flagellin activates basolaterally expressed TLR5 to induce epithelial proinflammatory gene expression.</title>
        <authorList>
            <person name="Gewirtz A.T."/>
            <person name="Navas T.A."/>
            <person name="Lyons S."/>
            <person name="Godowski P.J."/>
            <person name="Madara J.L."/>
        </authorList>
    </citation>
    <scope>TISSUE SPECIFICITY</scope>
    <scope>FUNCTION</scope>
</reference>
<reference key="12">
    <citation type="journal article" date="2001" name="Nature">
        <title>The innate immune response to bacterial flagellin is mediated by Toll-like receptor 5.</title>
        <authorList>
            <person name="Hayashi F."/>
            <person name="Smith K.D."/>
            <person name="Ozinsky A."/>
            <person name="Hawn T.R."/>
            <person name="Yi E.C."/>
            <person name="Goodlett D.R."/>
            <person name="Eng J.K."/>
            <person name="Akira S."/>
            <person name="Underhill D.M."/>
            <person name="Aderem A."/>
        </authorList>
    </citation>
    <scope>FUNCTION</scope>
</reference>
<reference key="13">
    <citation type="journal article" date="2005" name="Proc. Natl. Acad. Sci. U.S.A.">
        <title>A stop codon polymorphism of Toll-like receptor 5 is associated with resistance to systemic lupus erythematosus.</title>
        <authorList>
            <person name="Hawn T.R."/>
            <person name="Wu H."/>
            <person name="Grossman J.M."/>
            <person name="Hahn B.H."/>
            <person name="Tsao B.P."/>
            <person name="Aderem A."/>
        </authorList>
    </citation>
    <scope>ASSOCIATION WITH RESISTANCE TO SLEB1</scope>
    <scope>VARIANTS SER-592 AND LEU-616</scope>
</reference>
<reference key="14">
    <citation type="journal article" date="2007" name="Biochem. Biophys. Res. Commun.">
        <title>A phosphorylation site in the Toll-like receptor 5 TIR domain is required for inflammatory signalling in response to flagellin.</title>
        <authorList>
            <person name="Ivison S.M."/>
            <person name="Khan M.A."/>
            <person name="Graham N.R."/>
            <person name="Bernales C.Q."/>
            <person name="Kaleem A."/>
            <person name="Tirling C.O."/>
            <person name="Cherkasov A."/>
            <person name="Steiner T.S."/>
        </authorList>
    </citation>
    <scope>PHOSPHORYLATION AT TYR-798</scope>
</reference>
<reference key="15">
    <citation type="journal article" date="2007" name="J. Immunol.">
        <title>Protein kinase D interaction with TLR5 is required for inflammatory signaling in response to bacterial flagellin.</title>
        <authorList>
            <person name="Ivison S.M."/>
            <person name="Graham N.R."/>
            <person name="Bernales C.Q."/>
            <person name="Kifayet A."/>
            <person name="Ng N."/>
            <person name="Shobab L.A."/>
            <person name="Steiner T.S."/>
        </authorList>
    </citation>
    <scope>PHOSPHORYLATION AT SER-805</scope>
</reference>
<reference key="16">
    <citation type="journal article" date="2008" name="J. Immunol.">
        <title>Innate immunity mediated by TLR5 as a novel antiinflammatory target for cystic fibrosis lung disease.</title>
        <authorList>
            <person name="Blohmke C.J."/>
            <person name="Victor R.E."/>
            <person name="Hirschfeld A.F."/>
            <person name="Elias I.M."/>
            <person name="Hancock D.G."/>
            <person name="Lane C.R."/>
            <person name="Davidson A.G."/>
            <person name="Wilcox P.G."/>
            <person name="Smith K.D."/>
            <person name="Overhage J."/>
            <person name="Hancock R.E."/>
            <person name="Turvey S.E."/>
        </authorList>
    </citation>
    <scope>FUNCTION</scope>
    <scope>TISSUE SPECIFICITY</scope>
</reference>
<reference key="17">
    <citation type="journal article" date="2010" name="J. Biol. Chem.">
        <title>TRIF mediates Toll-like receptor 5-induced signaling in intestinal epithelial cells.</title>
        <authorList>
            <person name="Choi Y.J."/>
            <person name="Im E."/>
            <person name="Chung H.K."/>
            <person name="Pothoulakis C."/>
            <person name="Rhee S.H."/>
        </authorList>
    </citation>
    <scope>FUNCTION</scope>
    <scope>INTERACTION WITH TICAM1 AND MYD88</scope>
    <scope>SUBCELLULAR LOCATION</scope>
</reference>
<reference key="18">
    <citation type="journal article" date="2013" name="J. Immunol.">
        <title>Impaired TLR5 functionality is associated with survival in melioidosis.</title>
        <authorList>
            <person name="West T.E."/>
            <person name="Chantratita N."/>
            <person name="Chierakul W."/>
            <person name="Limmathurotsakul D."/>
            <person name="Wuthiekanun V."/>
            <person name="Myers N.D."/>
            <person name="Emond M.J."/>
            <person name="Wurfel M.M."/>
            <person name="Hawn T.R."/>
            <person name="Peacock S.J."/>
            <person name="Skerrett S.J."/>
        </authorList>
    </citation>
    <scope>POLYMORPHISM</scope>
    <scope>INVOLVEMENT IN RESISTANCE TO MELIOIDOSIS</scope>
</reference>
<reference key="19">
    <citation type="journal article" date="2014" name="Proc. Natl. Acad. Sci. U.S.A.">
        <title>UNC93B1 is essential for the plasma membrane localization and signaling of Toll-like receptor 5.</title>
        <authorList>
            <person name="Huh J.W."/>
            <person name="Shibata T."/>
            <person name="Hwang M."/>
            <person name="Kwon E.H."/>
            <person name="Jang M.S."/>
            <person name="Fukui R."/>
            <person name="Kanno A."/>
            <person name="Jung D.J."/>
            <person name="Jang M.H."/>
            <person name="Miyake K."/>
            <person name="Kim Y.M."/>
        </authorList>
    </citation>
    <scope>INTERACTION WITH UNC93B1</scope>
    <scope>SUBCELLULAR LOCATION</scope>
</reference>
<reference key="20">
    <citation type="journal article" date="2018" name="Int. J. Med. Microbiol.">
        <title>Enterohemorrhagic Escherichia coli O157 outer membrane vesicles induce interleukin 8 production in human intestinal epithelial cells by signaling via Toll-like receptors TLR4 and TLR5 and activation of the nuclear factor NF-kappaB.</title>
        <authorList>
            <person name="Bielaszewska M."/>
            <person name="Marejkova M."/>
            <person name="Bauwens A."/>
            <person name="Kunsmann-Prokscha L."/>
            <person name="Mellmann A."/>
            <person name="Karch H."/>
        </authorList>
    </citation>
    <scope>FUNCTION</scope>
</reference>
<reference key="21">
    <citation type="journal article" date="2012" name="J. Struct. Biol.">
        <title>Toll-like receptor 5 forms asymmetric dimers in the absence of flagellin.</title>
        <authorList>
            <person name="Zhou K."/>
            <person name="Kanai R."/>
            <person name="Lee P."/>
            <person name="Wang H.W."/>
            <person name="Modis Y."/>
        </authorList>
    </citation>
    <scope>STRUCTURE BY ELECTRON MICROSCOPY (26.0 ANGSTROMS) OF 23-858</scope>
    <scope>GLYCOSYLATION AT ASN-37; ASN-46; ASN-245; ASN-342; ASN-422; ASN-595 AND ASN-598</scope>
    <scope>DISULFIDE BONDS</scope>
    <scope>LRR REPEATS</scope>
    <scope>SUBUNIT</scope>
</reference>
<reference key="22">
    <citation type="journal article" date="2003" name="J. Exp. Med.">
        <title>A common dominant TLR5 stop codon polymorphism abolishes flagellin signaling and is associated with susceptibility to legionnaires' disease.</title>
        <authorList>
            <person name="Hawn T.R."/>
            <person name="Verbon A."/>
            <person name="Lettinga K.D."/>
            <person name="Zhao L.P."/>
            <person name="Li S.S."/>
            <person name="Laws R.J."/>
            <person name="Skerrett S.J."/>
            <person name="Beutler B."/>
            <person name="Schroeder L."/>
            <person name="Nachman A."/>
            <person name="Ozinsky A."/>
            <person name="Smith K.D."/>
            <person name="Aderem A."/>
        </authorList>
    </citation>
    <scope>VARIANTS 392-ARG--SER-858 DEL; SER-592 AND LEU-616</scope>
</reference>
<sequence length="858" mass="97800">MGDHLDLLLGVVLMAGPVFGIPSCSFDGRIAFYRFCNLTQVPQVLNTTERLLLSFNYIRTVTASSFPFLEQLQLLELGSQYTPLTIDKEAFRNLPNLRILDLGSSKIYFLHPDAFQGLFHLFELRLYFCGLSDAVLKDGYFRNLKALTRLDLSKNQIRSLYLHPSFGKLNSLKSIDFSSNQIFLVCEHELEPLQGKTLSFFSLAANSLYSRVSVDWGKCMNPFRNMVLEILDVSGNGWTVDITGNFSNAISKSQAFSLILAHHIMGAGFGFHNIKDPDQNTFAGLARSSVRHLDLSHGFVFSLNSRVFETLKDLKVLNLAYNKINKIADEAFYGLDNLQVLNLSYNLLGELYSSNFYGLPKVAYIDLQKNHIAIIQDQTFKFLEKLQTLDLRDNALTTIHFIPSIPDIFLSGNKLVTLPKINLTANLIHLSENRLENLDILYFLLRVPHLQILILNQNRFSSCSGDQTPSENPSLEQLFLGENMLQLAWETELCWDVFEGLSHLQVLYLNHNYLNSLPPGVFSHLTALRGLSLNSNRLTVLSHNDLPANLEILDISRNQLLAPNPDVFVSLSVLDITHNKFICECELSTFINWLNHTNVTIAGPPADIYCVYPDSFSGVSLFSLSTEGCDEEEVLKSLKFSLFIVCTVTLTLFLMTILTVTKFRGFCFICYKTAQRLVFKDHPQGTEPDMYKYDAYLCFSSKDFTWVQNALLKHLDTQYSDQNRFNLCFEERDFVPGENRIANIQDAIWNSRKIVCLVSRHFLRDGWCLEAFSYAQGRCLSDLNSALIMVVVGSLSQYQLMKHQSIRGFVQKQQYLRWPEDLQDVGWFLHKLSQQILKKEKEKKKDNNIPLQTVATIS</sequence>
<protein>
    <recommendedName>
        <fullName>Toll-like receptor 5</fullName>
    </recommendedName>
    <alternativeName>
        <fullName>Toll/interleukin-1 receptor-like protein 3</fullName>
    </alternativeName>
</protein>
<organism>
    <name type="scientific">Homo sapiens</name>
    <name type="common">Human</name>
    <dbReference type="NCBI Taxonomy" id="9606"/>
    <lineage>
        <taxon>Eukaryota</taxon>
        <taxon>Metazoa</taxon>
        <taxon>Chordata</taxon>
        <taxon>Craniata</taxon>
        <taxon>Vertebrata</taxon>
        <taxon>Euteleostomi</taxon>
        <taxon>Mammalia</taxon>
        <taxon>Eutheria</taxon>
        <taxon>Euarchontoglires</taxon>
        <taxon>Primates</taxon>
        <taxon>Haplorrhini</taxon>
        <taxon>Catarrhini</taxon>
        <taxon>Hominidae</taxon>
        <taxon>Homo</taxon>
    </lineage>
</organism>
<name>TLR5_HUMAN</name>
<dbReference type="EMBL" id="AF051151">
    <property type="protein sequence ID" value="AAC34376.1"/>
    <property type="molecule type" value="mRNA"/>
</dbReference>
<dbReference type="EMBL" id="AB060695">
    <property type="protein sequence ID" value="BAB43955.1"/>
    <property type="molecule type" value="mRNA"/>
</dbReference>
<dbReference type="EMBL" id="AB445645">
    <property type="protein sequence ID" value="BAG55042.1"/>
    <property type="molecule type" value="mRNA"/>
</dbReference>
<dbReference type="EMBL" id="FJ556976">
    <property type="protein sequence ID" value="ACM69019.1"/>
    <property type="molecule type" value="Genomic_DNA"/>
</dbReference>
<dbReference type="EMBL" id="FJ556977">
    <property type="protein sequence ID" value="ACM69020.1"/>
    <property type="molecule type" value="Genomic_DNA"/>
</dbReference>
<dbReference type="EMBL" id="FJ556979">
    <property type="protein sequence ID" value="ACM69022.1"/>
    <property type="molecule type" value="Genomic_DNA"/>
</dbReference>
<dbReference type="EMBL" id="FJ556980">
    <property type="protein sequence ID" value="ACM69023.1"/>
    <property type="molecule type" value="Genomic_DNA"/>
</dbReference>
<dbReference type="EMBL" id="FJ556987">
    <property type="protein sequence ID" value="ACM69030.1"/>
    <property type="molecule type" value="Genomic_DNA"/>
</dbReference>
<dbReference type="EMBL" id="FJ556989">
    <property type="protein sequence ID" value="ACM69032.1"/>
    <property type="molecule type" value="Genomic_DNA"/>
</dbReference>
<dbReference type="EMBL" id="DQ026408">
    <property type="protein sequence ID" value="AAZ17463.1"/>
    <property type="molecule type" value="Genomic_DNA"/>
</dbReference>
<dbReference type="EMBL" id="DQ026409">
    <property type="protein sequence ID" value="AAZ17464.1"/>
    <property type="molecule type" value="Genomic_DNA"/>
</dbReference>
<dbReference type="EMBL" id="DQ026415">
    <property type="protein sequence ID" value="AAZ17469.1"/>
    <property type="molecule type" value="Genomic_DNA"/>
</dbReference>
<dbReference type="EMBL" id="AL929091">
    <property type="status" value="NOT_ANNOTATED_CDS"/>
    <property type="molecule type" value="Genomic_DNA"/>
</dbReference>
<dbReference type="EMBL" id="CH471100">
    <property type="protein sequence ID" value="EAW93262.1"/>
    <property type="molecule type" value="Genomic_DNA"/>
</dbReference>
<dbReference type="EMBL" id="CH471100">
    <property type="protein sequence ID" value="EAW93263.1"/>
    <property type="molecule type" value="Genomic_DNA"/>
</dbReference>
<dbReference type="EMBL" id="BC109118">
    <property type="protein sequence ID" value="AAI09119.1"/>
    <property type="molecule type" value="mRNA"/>
</dbReference>
<dbReference type="EMBL" id="BC109119">
    <property type="protein sequence ID" value="AAI09120.1"/>
    <property type="molecule type" value="mRNA"/>
</dbReference>
<dbReference type="EMBL" id="U88881">
    <property type="protein sequence ID" value="AAC34136.1"/>
    <property type="molecule type" value="mRNA"/>
</dbReference>
<dbReference type="CCDS" id="CCDS31033.1"/>
<dbReference type="RefSeq" id="NP_003259.2">
    <property type="nucleotide sequence ID" value="NM_003268.5"/>
</dbReference>
<dbReference type="RefSeq" id="XP_005273298.2">
    <property type="nucleotide sequence ID" value="XM_005273241.5"/>
</dbReference>
<dbReference type="RefSeq" id="XP_005273299.2">
    <property type="nucleotide sequence ID" value="XM_005273242.5"/>
</dbReference>
<dbReference type="RefSeq" id="XP_005273300.2">
    <property type="nucleotide sequence ID" value="XM_005273243.5"/>
</dbReference>
<dbReference type="RefSeq" id="XP_006711567.1">
    <property type="nucleotide sequence ID" value="XM_006711504.4"/>
</dbReference>
<dbReference type="RefSeq" id="XP_006711568.1">
    <property type="nucleotide sequence ID" value="XM_006711505.4"/>
</dbReference>
<dbReference type="RefSeq" id="XP_006711569.1">
    <property type="nucleotide sequence ID" value="XM_006711506.4"/>
</dbReference>
<dbReference type="RefSeq" id="XP_011508239.1">
    <property type="nucleotide sequence ID" value="XM_011509937.3"/>
</dbReference>
<dbReference type="RefSeq" id="XP_016857697.1">
    <property type="nucleotide sequence ID" value="XM_017002208.2"/>
</dbReference>
<dbReference type="RefSeq" id="XP_047285317.1">
    <property type="nucleotide sequence ID" value="XM_047429361.1"/>
</dbReference>
<dbReference type="RefSeq" id="XP_047285323.1">
    <property type="nucleotide sequence ID" value="XM_047429367.1"/>
</dbReference>
<dbReference type="RefSeq" id="XP_054194530.1">
    <property type="nucleotide sequence ID" value="XM_054338555.1"/>
</dbReference>
<dbReference type="RefSeq" id="XP_054194531.1">
    <property type="nucleotide sequence ID" value="XM_054338556.1"/>
</dbReference>
<dbReference type="RefSeq" id="XP_054194532.1">
    <property type="nucleotide sequence ID" value="XM_054338557.1"/>
</dbReference>
<dbReference type="RefSeq" id="XP_054194533.1">
    <property type="nucleotide sequence ID" value="XM_054338558.1"/>
</dbReference>
<dbReference type="RefSeq" id="XP_054194534.1">
    <property type="nucleotide sequence ID" value="XM_054338559.1"/>
</dbReference>
<dbReference type="RefSeq" id="XP_054194535.1">
    <property type="nucleotide sequence ID" value="XM_054338560.1"/>
</dbReference>
<dbReference type="RefSeq" id="XP_054194536.1">
    <property type="nucleotide sequence ID" value="XM_054338561.1"/>
</dbReference>
<dbReference type="RefSeq" id="XP_054194537.1">
    <property type="nucleotide sequence ID" value="XM_054338562.1"/>
</dbReference>
<dbReference type="RefSeq" id="XP_054194538.1">
    <property type="nucleotide sequence ID" value="XM_054338563.1"/>
</dbReference>
<dbReference type="RefSeq" id="XP_054194539.1">
    <property type="nucleotide sequence ID" value="XM_054338564.1"/>
</dbReference>
<dbReference type="PDB" id="3J0A">
    <property type="method" value="EM"/>
    <property type="resolution" value="26.00 A"/>
    <property type="chains" value="A/B=23-858"/>
</dbReference>
<dbReference type="PDB" id="8AR2">
    <property type="method" value="NMR"/>
    <property type="chains" value="A=632-680"/>
</dbReference>
<dbReference type="PDBsum" id="3J0A"/>
<dbReference type="PDBsum" id="8AR2"/>
<dbReference type="EMDB" id="EMD-5287"/>
<dbReference type="SMR" id="O60602"/>
<dbReference type="BioGRID" id="112955">
    <property type="interactions" value="26"/>
</dbReference>
<dbReference type="CORUM" id="O60602"/>
<dbReference type="FunCoup" id="O60602">
    <property type="interactions" value="639"/>
</dbReference>
<dbReference type="IntAct" id="O60602">
    <property type="interactions" value="22"/>
</dbReference>
<dbReference type="MINT" id="O60602"/>
<dbReference type="STRING" id="9606.ENSP00000496355"/>
<dbReference type="BindingDB" id="O60602"/>
<dbReference type="ChEMBL" id="CHEMBL2176839"/>
<dbReference type="GlyCosmos" id="O60602">
    <property type="glycosylation" value="7 sites, No reported glycans"/>
</dbReference>
<dbReference type="GlyGen" id="O60602">
    <property type="glycosylation" value="7 sites, 1 N-linked glycan (1 site)"/>
</dbReference>
<dbReference type="iPTMnet" id="O60602"/>
<dbReference type="PhosphoSitePlus" id="O60602"/>
<dbReference type="BioMuta" id="TLR5"/>
<dbReference type="jPOST" id="O60602"/>
<dbReference type="MassIVE" id="O60602"/>
<dbReference type="PaxDb" id="9606-ENSP00000440643"/>
<dbReference type="PeptideAtlas" id="O60602"/>
<dbReference type="ProteomicsDB" id="49480"/>
<dbReference type="Antibodypedia" id="2711">
    <property type="antibodies" value="968 antibodies from 44 providers"/>
</dbReference>
<dbReference type="DNASU" id="7100"/>
<dbReference type="Ensembl" id="ENST00000407096.7">
    <property type="protein sequence ID" value="ENSP00000385458.3"/>
    <property type="gene ID" value="ENSG00000187554.15"/>
</dbReference>
<dbReference type="Ensembl" id="ENST00000484766.2">
    <property type="protein sequence ID" value="ENSP00000519510.1"/>
    <property type="gene ID" value="ENSG00000187554.15"/>
</dbReference>
<dbReference type="Ensembl" id="ENST00000642603.2">
    <property type="protein sequence ID" value="ENSP00000496355.1"/>
    <property type="gene ID" value="ENSG00000187554.15"/>
</dbReference>
<dbReference type="Ensembl" id="ENST00000645434.2">
    <property type="protein sequence ID" value="ENSP00000493892.2"/>
    <property type="gene ID" value="ENSG00000187554.15"/>
</dbReference>
<dbReference type="Ensembl" id="ENST00000714229.1">
    <property type="protein sequence ID" value="ENSP00000519509.1"/>
    <property type="gene ID" value="ENSG00000187554.15"/>
</dbReference>
<dbReference type="GeneID" id="7100"/>
<dbReference type="KEGG" id="hsa:7100"/>
<dbReference type="MANE-Select" id="ENST00000642603.2">
    <property type="protein sequence ID" value="ENSP00000496355.1"/>
    <property type="RefSeq nucleotide sequence ID" value="NM_003268.6"/>
    <property type="RefSeq protein sequence ID" value="NP_003259.2"/>
</dbReference>
<dbReference type="UCSC" id="uc001hnw.3">
    <property type="organism name" value="human"/>
</dbReference>
<dbReference type="AGR" id="HGNC:11851"/>
<dbReference type="CTD" id="7100"/>
<dbReference type="DisGeNET" id="7100"/>
<dbReference type="GeneCards" id="TLR5"/>
<dbReference type="HGNC" id="HGNC:11851">
    <property type="gene designation" value="TLR5"/>
</dbReference>
<dbReference type="HPA" id="ENSG00000187554">
    <property type="expression patterns" value="Low tissue specificity"/>
</dbReference>
<dbReference type="MalaCards" id="TLR5"/>
<dbReference type="MIM" id="109100">
    <property type="type" value="phenotype"/>
</dbReference>
<dbReference type="MIM" id="601744">
    <property type="type" value="phenotype"/>
</dbReference>
<dbReference type="MIM" id="603031">
    <property type="type" value="gene"/>
</dbReference>
<dbReference type="MIM" id="608556">
    <property type="type" value="phenotype"/>
</dbReference>
<dbReference type="MIM" id="615557">
    <property type="type" value="phenotype"/>
</dbReference>
<dbReference type="neXtProt" id="NX_O60602"/>
<dbReference type="OpenTargets" id="ENSG00000187554"/>
<dbReference type="PharmGKB" id="PA36553"/>
<dbReference type="VEuPathDB" id="HostDB:ENSG00000187554"/>
<dbReference type="eggNOG" id="KOG4641">
    <property type="taxonomic scope" value="Eukaryota"/>
</dbReference>
<dbReference type="GeneTree" id="ENSGT00940000162464"/>
<dbReference type="HOGENOM" id="CLU_006000_4_1_1"/>
<dbReference type="InParanoid" id="O60602"/>
<dbReference type="OMA" id="SYAQSRC"/>
<dbReference type="OrthoDB" id="6160824at2759"/>
<dbReference type="PAN-GO" id="O60602">
    <property type="GO annotations" value="4 GO annotations based on evolutionary models"/>
</dbReference>
<dbReference type="PhylomeDB" id="O60602"/>
<dbReference type="TreeFam" id="TF351113"/>
<dbReference type="PathwayCommons" id="O60602"/>
<dbReference type="Reactome" id="R-HSA-168176">
    <property type="pathway name" value="Toll Like Receptor 5 (TLR5) Cascade"/>
</dbReference>
<dbReference type="Reactome" id="R-HSA-5602680">
    <property type="pathway name" value="MyD88 deficiency (TLR5)"/>
</dbReference>
<dbReference type="Reactome" id="R-HSA-5603037">
    <property type="pathway name" value="IRAK4 deficiency (TLR5)"/>
</dbReference>
<dbReference type="Reactome" id="R-HSA-975871">
    <property type="pathway name" value="MyD88 cascade initiated on plasma membrane"/>
</dbReference>
<dbReference type="SignaLink" id="O60602"/>
<dbReference type="SIGNOR" id="O60602"/>
<dbReference type="BioGRID-ORCS" id="7100">
    <property type="hits" value="9 hits in 1072 CRISPR screens"/>
</dbReference>
<dbReference type="EvolutionaryTrace" id="O60602"/>
<dbReference type="GeneWiki" id="TLR_5"/>
<dbReference type="GenomeRNAi" id="7100"/>
<dbReference type="Pharos" id="O60602">
    <property type="development level" value="Tchem"/>
</dbReference>
<dbReference type="PRO" id="PR:O60602"/>
<dbReference type="Proteomes" id="UP000005640">
    <property type="component" value="Chromosome 1"/>
</dbReference>
<dbReference type="RNAct" id="O60602">
    <property type="molecule type" value="protein"/>
</dbReference>
<dbReference type="Bgee" id="ENSG00000187554">
    <property type="expression patterns" value="Expressed in monocyte and 170 other cell types or tissues"/>
</dbReference>
<dbReference type="ExpressionAtlas" id="O60602">
    <property type="expression patterns" value="baseline and differential"/>
</dbReference>
<dbReference type="GO" id="GO:0005886">
    <property type="term" value="C:plasma membrane"/>
    <property type="evidence" value="ECO:0000314"/>
    <property type="project" value="UniProt"/>
</dbReference>
<dbReference type="GO" id="GO:0005149">
    <property type="term" value="F:interleukin-1 receptor binding"/>
    <property type="evidence" value="ECO:0000353"/>
    <property type="project" value="UniProtKB"/>
</dbReference>
<dbReference type="GO" id="GO:0038187">
    <property type="term" value="F:pattern recognition receptor activity"/>
    <property type="evidence" value="ECO:0000314"/>
    <property type="project" value="BHF-UCL"/>
</dbReference>
<dbReference type="GO" id="GO:0038023">
    <property type="term" value="F:signaling receptor activity"/>
    <property type="evidence" value="ECO:0000318"/>
    <property type="project" value="GO_Central"/>
</dbReference>
<dbReference type="GO" id="GO:0004888">
    <property type="term" value="F:transmembrane signaling receptor activity"/>
    <property type="evidence" value="ECO:0007669"/>
    <property type="project" value="InterPro"/>
</dbReference>
<dbReference type="GO" id="GO:0071222">
    <property type="term" value="P:cellular response to lipopolysaccharide"/>
    <property type="evidence" value="ECO:0007669"/>
    <property type="project" value="Ensembl"/>
</dbReference>
<dbReference type="GO" id="GO:0071260">
    <property type="term" value="P:cellular response to mechanical stimulus"/>
    <property type="evidence" value="ECO:0000270"/>
    <property type="project" value="UniProtKB"/>
</dbReference>
<dbReference type="GO" id="GO:0006954">
    <property type="term" value="P:inflammatory response"/>
    <property type="evidence" value="ECO:0000318"/>
    <property type="project" value="GO_Central"/>
</dbReference>
<dbReference type="GO" id="GO:0045087">
    <property type="term" value="P:innate immune response"/>
    <property type="evidence" value="ECO:0007669"/>
    <property type="project" value="UniProtKB-KW"/>
</dbReference>
<dbReference type="GO" id="GO:0008584">
    <property type="term" value="P:male gonad development"/>
    <property type="evidence" value="ECO:0007669"/>
    <property type="project" value="Ensembl"/>
</dbReference>
<dbReference type="GO" id="GO:0032757">
    <property type="term" value="P:positive regulation of interleukin-8 production"/>
    <property type="evidence" value="ECO:0000314"/>
    <property type="project" value="BHF-UCL"/>
</dbReference>
<dbReference type="GO" id="GO:0045429">
    <property type="term" value="P:positive regulation of nitric oxide biosynthetic process"/>
    <property type="evidence" value="ECO:0007669"/>
    <property type="project" value="Ensembl"/>
</dbReference>
<dbReference type="GO" id="GO:0034146">
    <property type="term" value="P:toll-like receptor 5 signaling pathway"/>
    <property type="evidence" value="ECO:0000314"/>
    <property type="project" value="BHF-UCL"/>
</dbReference>
<dbReference type="GO" id="GO:0002224">
    <property type="term" value="P:toll-like receptor signaling pathway"/>
    <property type="evidence" value="ECO:0000318"/>
    <property type="project" value="GO_Central"/>
</dbReference>
<dbReference type="FunFam" id="3.40.50.10140:FF:000001">
    <property type="entry name" value="Toll-like receptor 2"/>
    <property type="match status" value="1"/>
</dbReference>
<dbReference type="FunFam" id="3.80.10.10:FF:000306">
    <property type="entry name" value="Toll-like receptor 5"/>
    <property type="match status" value="1"/>
</dbReference>
<dbReference type="FunFam" id="3.80.10.10:FF:000365">
    <property type="entry name" value="Toll-like receptor 5"/>
    <property type="match status" value="1"/>
</dbReference>
<dbReference type="FunFam" id="3.80.10.10:FF:000841">
    <property type="entry name" value="Toll-like receptor 5"/>
    <property type="match status" value="1"/>
</dbReference>
<dbReference type="Gene3D" id="3.80.10.10">
    <property type="entry name" value="Ribonuclease Inhibitor"/>
    <property type="match status" value="3"/>
</dbReference>
<dbReference type="Gene3D" id="3.40.50.10140">
    <property type="entry name" value="Toll/interleukin-1 receptor homology (TIR) domain"/>
    <property type="match status" value="1"/>
</dbReference>
<dbReference type="InterPro" id="IPR000483">
    <property type="entry name" value="Cys-rich_flank_reg_C"/>
</dbReference>
<dbReference type="InterPro" id="IPR001611">
    <property type="entry name" value="Leu-rich_rpt"/>
</dbReference>
<dbReference type="InterPro" id="IPR003591">
    <property type="entry name" value="Leu-rich_rpt_typical-subtyp"/>
</dbReference>
<dbReference type="InterPro" id="IPR032675">
    <property type="entry name" value="LRR_dom_sf"/>
</dbReference>
<dbReference type="InterPro" id="IPR000157">
    <property type="entry name" value="TIR_dom"/>
</dbReference>
<dbReference type="InterPro" id="IPR017241">
    <property type="entry name" value="Toll-like_receptor"/>
</dbReference>
<dbReference type="InterPro" id="IPR035897">
    <property type="entry name" value="Toll_tir_struct_dom_sf"/>
</dbReference>
<dbReference type="PANTHER" id="PTHR24365">
    <property type="entry name" value="TOLL-LIKE RECEPTOR"/>
    <property type="match status" value="1"/>
</dbReference>
<dbReference type="PANTHER" id="PTHR24365:SF525">
    <property type="entry name" value="TOLL-LIKE RECEPTOR 5"/>
    <property type="match status" value="1"/>
</dbReference>
<dbReference type="Pfam" id="PF00560">
    <property type="entry name" value="LRR_1"/>
    <property type="match status" value="1"/>
</dbReference>
<dbReference type="Pfam" id="PF13855">
    <property type="entry name" value="LRR_8"/>
    <property type="match status" value="5"/>
</dbReference>
<dbReference type="Pfam" id="PF01582">
    <property type="entry name" value="TIR"/>
    <property type="match status" value="1"/>
</dbReference>
<dbReference type="PIRSF" id="PIRSF037595">
    <property type="entry name" value="Toll-like_receptor"/>
    <property type="match status" value="1"/>
</dbReference>
<dbReference type="PRINTS" id="PR00019">
    <property type="entry name" value="LEURICHRPT"/>
</dbReference>
<dbReference type="SMART" id="SM00365">
    <property type="entry name" value="LRR_SD22"/>
    <property type="match status" value="5"/>
</dbReference>
<dbReference type="SMART" id="SM00369">
    <property type="entry name" value="LRR_TYP"/>
    <property type="match status" value="9"/>
</dbReference>
<dbReference type="SMART" id="SM00082">
    <property type="entry name" value="LRRCT"/>
    <property type="match status" value="1"/>
</dbReference>
<dbReference type="SMART" id="SM00255">
    <property type="entry name" value="TIR"/>
    <property type="match status" value="1"/>
</dbReference>
<dbReference type="SUPFAM" id="SSF52058">
    <property type="entry name" value="L domain-like"/>
    <property type="match status" value="2"/>
</dbReference>
<dbReference type="SUPFAM" id="SSF52200">
    <property type="entry name" value="Toll/Interleukin receptor TIR domain"/>
    <property type="match status" value="1"/>
</dbReference>
<dbReference type="PROSITE" id="PS51450">
    <property type="entry name" value="LRR"/>
    <property type="match status" value="12"/>
</dbReference>
<dbReference type="PROSITE" id="PS50104">
    <property type="entry name" value="TIR"/>
    <property type="match status" value="1"/>
</dbReference>
<evidence type="ECO:0000250" key="1">
    <source>
        <dbReference type="UniProtKB" id="Q9JLF7"/>
    </source>
</evidence>
<evidence type="ECO:0000255" key="2"/>
<evidence type="ECO:0000255" key="3">
    <source>
        <dbReference type="PROSITE-ProRule" id="PRU00204"/>
    </source>
</evidence>
<evidence type="ECO:0000269" key="4">
    <source>
    </source>
</evidence>
<evidence type="ECO:0000269" key="5">
    <source>
    </source>
</evidence>
<evidence type="ECO:0000269" key="6">
    <source>
    </source>
</evidence>
<evidence type="ECO:0000269" key="7">
    <source>
    </source>
</evidence>
<evidence type="ECO:0000269" key="8">
    <source>
    </source>
</evidence>
<evidence type="ECO:0000269" key="9">
    <source>
    </source>
</evidence>
<evidence type="ECO:0000269" key="10">
    <source>
    </source>
</evidence>
<evidence type="ECO:0000269" key="11">
    <source>
    </source>
</evidence>
<evidence type="ECO:0000269" key="12">
    <source>
    </source>
</evidence>
<evidence type="ECO:0000269" key="13">
    <source>
    </source>
</evidence>
<evidence type="ECO:0000269" key="14">
    <source>
    </source>
</evidence>
<evidence type="ECO:0000269" key="15">
    <source>
    </source>
</evidence>
<evidence type="ECO:0000269" key="16">
    <source>
    </source>
</evidence>
<evidence type="ECO:0000269" key="17">
    <source>
    </source>
</evidence>
<evidence type="ECO:0000305" key="18"/>
<evidence type="ECO:0007829" key="19">
    <source>
        <dbReference type="PDB" id="8AR2"/>
    </source>
</evidence>